<protein>
    <recommendedName>
        <fullName evidence="1">Threonine--tRNA ligase</fullName>
        <ecNumber evidence="1">6.1.1.3</ecNumber>
    </recommendedName>
    <alternativeName>
        <fullName evidence="1">Threonyl-tRNA synthetase</fullName>
        <shortName evidence="1">ThrRS</shortName>
    </alternativeName>
</protein>
<keyword id="KW-0030">Aminoacyl-tRNA synthetase</keyword>
<keyword id="KW-0067">ATP-binding</keyword>
<keyword id="KW-0963">Cytoplasm</keyword>
<keyword id="KW-0436">Ligase</keyword>
<keyword id="KW-0479">Metal-binding</keyword>
<keyword id="KW-0547">Nucleotide-binding</keyword>
<keyword id="KW-0648">Protein biosynthesis</keyword>
<keyword id="KW-0694">RNA-binding</keyword>
<keyword id="KW-0820">tRNA-binding</keyword>
<keyword id="KW-0862">Zinc</keyword>
<sequence length="645" mass="74460">MEQINIQFPDGNKKAFDKGTTTEDIAQSISPGLRKKAVAGKFNGQLVDLTKPLETDGSIEIVTPGSEEALEVLRHSTAHLMAHAIKRLYGNVKFGVGPVIEGGFYYDFDIDQNISSDDFEQIEKTMKQIVNENMKIERKVVSRDEAKELFSNDEYKLELIDAIPEDENVTLYSQGDFTDLCRGVHVPSTAKIKEFKLLSTAGAYWRGDSNNKMLQRIYGTAFFDKKELKAHLQMLEERKERDHRKIGKELELFTNSQLVGAGLPLWLPNGATIRREIERYIVDKEVSMGYDHVYTPVLANVDLYKTSGHWDHYQEDMFPPMQLDETESMVLRPMNCPHHMMIYANKPHSYRELPIRIAELGTMHRYEASGAVSGLQRVRGMTLNDSHIFVRPDQIKEEFKRVVNMIIDVYKDFGFEDYSFRLSYRDPEDKEKYFDDDDMWNKAENMLKEAADELGLSYEEAIGEAAFYGPKLDVQVKTAMGKEETLSTAQLDFLLPERFDLTYIGQDGEHHRPVVIHRGVVSTMERFVAFLTEETKGAFPTWLAPKQVQIIPVNVDLHYDYARQLQDELKSQGVRVSIDDRNEKMGYKIREAQMQKIPYQIVVGDKEVENNQVNVRQYGSQDQETVEKDEFIWNLVDEIRLKKHR</sequence>
<name>SYT_STAA2</name>
<reference key="1">
    <citation type="submission" date="2007-06" db="EMBL/GenBank/DDBJ databases">
        <title>Complete sequence of chromosome of Staphylococcus aureus subsp. aureus JH1.</title>
        <authorList>
            <consortium name="US DOE Joint Genome Institute"/>
            <person name="Copeland A."/>
            <person name="Lucas S."/>
            <person name="Lapidus A."/>
            <person name="Barry K."/>
            <person name="Detter J.C."/>
            <person name="Glavina del Rio T."/>
            <person name="Hammon N."/>
            <person name="Israni S."/>
            <person name="Dalin E."/>
            <person name="Tice H."/>
            <person name="Pitluck S."/>
            <person name="Chain P."/>
            <person name="Malfatti S."/>
            <person name="Shin M."/>
            <person name="Vergez L."/>
            <person name="Schmutz J."/>
            <person name="Larimer F."/>
            <person name="Land M."/>
            <person name="Hauser L."/>
            <person name="Kyrpides N."/>
            <person name="Ivanova N."/>
            <person name="Tomasz A."/>
            <person name="Richardson P."/>
        </authorList>
    </citation>
    <scope>NUCLEOTIDE SEQUENCE [LARGE SCALE GENOMIC DNA]</scope>
    <source>
        <strain>JH1</strain>
    </source>
</reference>
<proteinExistence type="inferred from homology"/>
<feature type="chain" id="PRO_1000077376" description="Threonine--tRNA ligase">
    <location>
        <begin position="1"/>
        <end position="645"/>
    </location>
</feature>
<feature type="domain" description="TGS" evidence="2">
    <location>
        <begin position="1"/>
        <end position="63"/>
    </location>
</feature>
<feature type="region of interest" description="Catalytic" evidence="1">
    <location>
        <begin position="242"/>
        <end position="540"/>
    </location>
</feature>
<feature type="binding site" evidence="1">
    <location>
        <position position="336"/>
    </location>
    <ligand>
        <name>Zn(2+)</name>
        <dbReference type="ChEBI" id="CHEBI:29105"/>
    </ligand>
</feature>
<feature type="binding site" evidence="1">
    <location>
        <position position="387"/>
    </location>
    <ligand>
        <name>Zn(2+)</name>
        <dbReference type="ChEBI" id="CHEBI:29105"/>
    </ligand>
</feature>
<feature type="binding site" evidence="1">
    <location>
        <position position="517"/>
    </location>
    <ligand>
        <name>Zn(2+)</name>
        <dbReference type="ChEBI" id="CHEBI:29105"/>
    </ligand>
</feature>
<evidence type="ECO:0000255" key="1">
    <source>
        <dbReference type="HAMAP-Rule" id="MF_00184"/>
    </source>
</evidence>
<evidence type="ECO:0000255" key="2">
    <source>
        <dbReference type="PROSITE-ProRule" id="PRU01228"/>
    </source>
</evidence>
<dbReference type="EC" id="6.1.1.3" evidence="1"/>
<dbReference type="EMBL" id="CP000736">
    <property type="protein sequence ID" value="ABR52618.1"/>
    <property type="molecule type" value="Genomic_DNA"/>
</dbReference>
<dbReference type="SMR" id="A6U2F0"/>
<dbReference type="KEGG" id="sah:SaurJH1_1774"/>
<dbReference type="HOGENOM" id="CLU_008554_0_1_9"/>
<dbReference type="GO" id="GO:0005737">
    <property type="term" value="C:cytoplasm"/>
    <property type="evidence" value="ECO:0007669"/>
    <property type="project" value="UniProtKB-SubCell"/>
</dbReference>
<dbReference type="GO" id="GO:0005524">
    <property type="term" value="F:ATP binding"/>
    <property type="evidence" value="ECO:0007669"/>
    <property type="project" value="UniProtKB-UniRule"/>
</dbReference>
<dbReference type="GO" id="GO:0140096">
    <property type="term" value="F:catalytic activity, acting on a protein"/>
    <property type="evidence" value="ECO:0007669"/>
    <property type="project" value="UniProtKB-ARBA"/>
</dbReference>
<dbReference type="GO" id="GO:0046872">
    <property type="term" value="F:metal ion binding"/>
    <property type="evidence" value="ECO:0007669"/>
    <property type="project" value="UniProtKB-KW"/>
</dbReference>
<dbReference type="GO" id="GO:0004829">
    <property type="term" value="F:threonine-tRNA ligase activity"/>
    <property type="evidence" value="ECO:0007669"/>
    <property type="project" value="UniProtKB-UniRule"/>
</dbReference>
<dbReference type="GO" id="GO:0016740">
    <property type="term" value="F:transferase activity"/>
    <property type="evidence" value="ECO:0007669"/>
    <property type="project" value="UniProtKB-ARBA"/>
</dbReference>
<dbReference type="GO" id="GO:0000049">
    <property type="term" value="F:tRNA binding"/>
    <property type="evidence" value="ECO:0007669"/>
    <property type="project" value="UniProtKB-KW"/>
</dbReference>
<dbReference type="GO" id="GO:0006435">
    <property type="term" value="P:threonyl-tRNA aminoacylation"/>
    <property type="evidence" value="ECO:0007669"/>
    <property type="project" value="UniProtKB-UniRule"/>
</dbReference>
<dbReference type="CDD" id="cd01667">
    <property type="entry name" value="TGS_ThrRS"/>
    <property type="match status" value="1"/>
</dbReference>
<dbReference type="CDD" id="cd00860">
    <property type="entry name" value="ThrRS_anticodon"/>
    <property type="match status" value="1"/>
</dbReference>
<dbReference type="CDD" id="cd00771">
    <property type="entry name" value="ThrRS_core"/>
    <property type="match status" value="1"/>
</dbReference>
<dbReference type="FunFam" id="3.10.20.30:FF:000005">
    <property type="entry name" value="Threonine--tRNA ligase"/>
    <property type="match status" value="1"/>
</dbReference>
<dbReference type="FunFam" id="3.30.54.20:FF:000002">
    <property type="entry name" value="Threonine--tRNA ligase"/>
    <property type="match status" value="1"/>
</dbReference>
<dbReference type="FunFam" id="3.30.930.10:FF:000002">
    <property type="entry name" value="Threonine--tRNA ligase"/>
    <property type="match status" value="1"/>
</dbReference>
<dbReference type="FunFam" id="3.40.50.800:FF:000001">
    <property type="entry name" value="Threonine--tRNA ligase"/>
    <property type="match status" value="1"/>
</dbReference>
<dbReference type="FunFam" id="3.30.980.10:FF:000005">
    <property type="entry name" value="Threonyl-tRNA synthetase, mitochondrial"/>
    <property type="match status" value="1"/>
</dbReference>
<dbReference type="Gene3D" id="3.10.20.30">
    <property type="match status" value="1"/>
</dbReference>
<dbReference type="Gene3D" id="3.30.54.20">
    <property type="match status" value="1"/>
</dbReference>
<dbReference type="Gene3D" id="3.40.50.800">
    <property type="entry name" value="Anticodon-binding domain"/>
    <property type="match status" value="1"/>
</dbReference>
<dbReference type="Gene3D" id="3.30.930.10">
    <property type="entry name" value="Bira Bifunctional Protein, Domain 2"/>
    <property type="match status" value="1"/>
</dbReference>
<dbReference type="Gene3D" id="3.30.980.10">
    <property type="entry name" value="Threonyl-trna Synthetase, Chain A, domain 2"/>
    <property type="match status" value="1"/>
</dbReference>
<dbReference type="HAMAP" id="MF_00184">
    <property type="entry name" value="Thr_tRNA_synth"/>
    <property type="match status" value="1"/>
</dbReference>
<dbReference type="InterPro" id="IPR002314">
    <property type="entry name" value="aa-tRNA-synt_IIb"/>
</dbReference>
<dbReference type="InterPro" id="IPR006195">
    <property type="entry name" value="aa-tRNA-synth_II"/>
</dbReference>
<dbReference type="InterPro" id="IPR045864">
    <property type="entry name" value="aa-tRNA-synth_II/BPL/LPL"/>
</dbReference>
<dbReference type="InterPro" id="IPR004154">
    <property type="entry name" value="Anticodon-bd"/>
</dbReference>
<dbReference type="InterPro" id="IPR036621">
    <property type="entry name" value="Anticodon-bd_dom_sf"/>
</dbReference>
<dbReference type="InterPro" id="IPR012675">
    <property type="entry name" value="Beta-grasp_dom_sf"/>
</dbReference>
<dbReference type="InterPro" id="IPR004095">
    <property type="entry name" value="TGS"/>
</dbReference>
<dbReference type="InterPro" id="IPR012676">
    <property type="entry name" value="TGS-like"/>
</dbReference>
<dbReference type="InterPro" id="IPR002320">
    <property type="entry name" value="Thr-tRNA-ligase_IIa"/>
</dbReference>
<dbReference type="InterPro" id="IPR018163">
    <property type="entry name" value="Thr/Ala-tRNA-synth_IIc_edit"/>
</dbReference>
<dbReference type="InterPro" id="IPR047246">
    <property type="entry name" value="ThrRS_anticodon"/>
</dbReference>
<dbReference type="InterPro" id="IPR033728">
    <property type="entry name" value="ThrRS_core"/>
</dbReference>
<dbReference type="InterPro" id="IPR012947">
    <property type="entry name" value="tRNA_SAD"/>
</dbReference>
<dbReference type="NCBIfam" id="TIGR00418">
    <property type="entry name" value="thrS"/>
    <property type="match status" value="1"/>
</dbReference>
<dbReference type="PANTHER" id="PTHR11451:SF56">
    <property type="entry name" value="THREONINE--TRNA LIGASE 1"/>
    <property type="match status" value="1"/>
</dbReference>
<dbReference type="PANTHER" id="PTHR11451">
    <property type="entry name" value="THREONINE-TRNA LIGASE"/>
    <property type="match status" value="1"/>
</dbReference>
<dbReference type="Pfam" id="PF03129">
    <property type="entry name" value="HGTP_anticodon"/>
    <property type="match status" value="1"/>
</dbReference>
<dbReference type="Pfam" id="PF02824">
    <property type="entry name" value="TGS"/>
    <property type="match status" value="1"/>
</dbReference>
<dbReference type="Pfam" id="PF00587">
    <property type="entry name" value="tRNA-synt_2b"/>
    <property type="match status" value="1"/>
</dbReference>
<dbReference type="Pfam" id="PF07973">
    <property type="entry name" value="tRNA_SAD"/>
    <property type="match status" value="1"/>
</dbReference>
<dbReference type="PRINTS" id="PR01047">
    <property type="entry name" value="TRNASYNTHTHR"/>
</dbReference>
<dbReference type="SMART" id="SM00863">
    <property type="entry name" value="tRNA_SAD"/>
    <property type="match status" value="1"/>
</dbReference>
<dbReference type="SUPFAM" id="SSF52954">
    <property type="entry name" value="Class II aaRS ABD-related"/>
    <property type="match status" value="1"/>
</dbReference>
<dbReference type="SUPFAM" id="SSF55681">
    <property type="entry name" value="Class II aaRS and biotin synthetases"/>
    <property type="match status" value="1"/>
</dbReference>
<dbReference type="SUPFAM" id="SSF81271">
    <property type="entry name" value="TGS-like"/>
    <property type="match status" value="1"/>
</dbReference>
<dbReference type="SUPFAM" id="SSF55186">
    <property type="entry name" value="ThrRS/AlaRS common domain"/>
    <property type="match status" value="1"/>
</dbReference>
<dbReference type="PROSITE" id="PS50862">
    <property type="entry name" value="AA_TRNA_LIGASE_II"/>
    <property type="match status" value="1"/>
</dbReference>
<dbReference type="PROSITE" id="PS51880">
    <property type="entry name" value="TGS"/>
    <property type="match status" value="1"/>
</dbReference>
<organism>
    <name type="scientific">Staphylococcus aureus (strain JH1)</name>
    <dbReference type="NCBI Taxonomy" id="359787"/>
    <lineage>
        <taxon>Bacteria</taxon>
        <taxon>Bacillati</taxon>
        <taxon>Bacillota</taxon>
        <taxon>Bacilli</taxon>
        <taxon>Bacillales</taxon>
        <taxon>Staphylococcaceae</taxon>
        <taxon>Staphylococcus</taxon>
    </lineage>
</organism>
<comment type="function">
    <text evidence="1">Catalyzes the attachment of threonine to tRNA(Thr) in a two-step reaction: L-threonine is first activated by ATP to form Thr-AMP and then transferred to the acceptor end of tRNA(Thr). Also edits incorrectly charged L-seryl-tRNA(Thr).</text>
</comment>
<comment type="catalytic activity">
    <reaction evidence="1">
        <text>tRNA(Thr) + L-threonine + ATP = L-threonyl-tRNA(Thr) + AMP + diphosphate + H(+)</text>
        <dbReference type="Rhea" id="RHEA:24624"/>
        <dbReference type="Rhea" id="RHEA-COMP:9670"/>
        <dbReference type="Rhea" id="RHEA-COMP:9704"/>
        <dbReference type="ChEBI" id="CHEBI:15378"/>
        <dbReference type="ChEBI" id="CHEBI:30616"/>
        <dbReference type="ChEBI" id="CHEBI:33019"/>
        <dbReference type="ChEBI" id="CHEBI:57926"/>
        <dbReference type="ChEBI" id="CHEBI:78442"/>
        <dbReference type="ChEBI" id="CHEBI:78534"/>
        <dbReference type="ChEBI" id="CHEBI:456215"/>
        <dbReference type="EC" id="6.1.1.3"/>
    </reaction>
</comment>
<comment type="cofactor">
    <cofactor evidence="1">
        <name>Zn(2+)</name>
        <dbReference type="ChEBI" id="CHEBI:29105"/>
    </cofactor>
    <text evidence="1">Binds 1 zinc ion per subunit.</text>
</comment>
<comment type="subunit">
    <text evidence="1">Homodimer.</text>
</comment>
<comment type="subcellular location">
    <subcellularLocation>
        <location evidence="1">Cytoplasm</location>
    </subcellularLocation>
</comment>
<comment type="similarity">
    <text evidence="1">Belongs to the class-II aminoacyl-tRNA synthetase family.</text>
</comment>
<gene>
    <name evidence="1" type="primary">thrS</name>
    <name type="ordered locus">SaurJH1_1774</name>
</gene>
<accession>A6U2F0</accession>